<sequence length="120" mass="13874">MFCVCLTLKIVYFDLIRPMCSLRRLYRRLRLVARLRREYRLRGLARYSGMMGSGFLWAGTKPLQAPYILLPAPVLRTPHPTRKLQTPLNEPPRTWRKTATTHTRGGSSLLITLPLKITVP</sequence>
<dbReference type="EMBL" id="AJ304456">
    <property type="protein sequence ID" value="CAC50260.1"/>
    <property type="molecule type" value="Genomic_DNA"/>
</dbReference>
<dbReference type="RefSeq" id="NP_150367.1">
    <property type="nucleotide sequence ID" value="NC_003054.1"/>
</dbReference>
<dbReference type="KEGG" id="vg:1732845"/>
<dbReference type="Proteomes" id="UP000185275">
    <property type="component" value="Genome"/>
</dbReference>
<feature type="chain" id="PRO_0000319861" description="Uncharacterized protein ORFV2">
    <location>
        <begin position="1"/>
        <end position="120"/>
    </location>
</feature>
<feature type="region of interest" description="Disordered" evidence="1">
    <location>
        <begin position="80"/>
        <end position="99"/>
    </location>
</feature>
<evidence type="ECO:0000256" key="1">
    <source>
        <dbReference type="SAM" id="MobiDB-lite"/>
    </source>
</evidence>
<protein>
    <recommendedName>
        <fullName>Uncharacterized protein ORFV2</fullName>
    </recommendedName>
</protein>
<proteinExistence type="predicted"/>
<organism>
    <name type="scientific">Goose circovirus</name>
    <name type="common">GoCV</name>
    <dbReference type="NCBI Taxonomy" id="146032"/>
    <lineage>
        <taxon>Viruses</taxon>
        <taxon>Monodnaviria</taxon>
        <taxon>Shotokuvirae</taxon>
        <taxon>Cressdnaviricota</taxon>
        <taxon>Arfiviricetes</taxon>
        <taxon>Cirlivirales</taxon>
        <taxon>Circoviridae</taxon>
        <taxon>Circovirus</taxon>
        <taxon>Circovirus goose</taxon>
    </lineage>
</organism>
<reference key="1">
    <citation type="journal article" date="2001" name="Virology">
        <title>Genome sequence determinations and analyses of novel circoviruses from goose and pigeon.</title>
        <authorList>
            <person name="Todd D."/>
            <person name="Weston J.H."/>
            <person name="Soike D."/>
            <person name="Smyth J.A."/>
        </authorList>
    </citation>
    <scope>NUCLEOTIDE SEQUENCE [GENOMIC DNA]</scope>
</reference>
<keyword id="KW-1185">Reference proteome</keyword>
<organismHost>
    <name type="scientific">Anser</name>
    <name type="common">geese</name>
    <dbReference type="NCBI Taxonomy" id="8842"/>
</organismHost>
<gene>
    <name type="ORF">ORFV2</name>
</gene>
<accession>Q91EK4</accession>
<name>ORFV2_GOCV</name>